<sequence length="131" mass="15445">MSLNQKALNSYVYTLAFSSLSFGLIFGLYLFVYSGFMAIALVTIAIIAFYALITYLVFAAPLQVWLRRRRRKFSLINFLIYIAVAFSAVFLFWFVDYPPNALTMFRSFEYYIMSIVAAFIYWFWDSIFLRN</sequence>
<organism>
    <name type="scientific">Bacillus subtilis (strain 168)</name>
    <dbReference type="NCBI Taxonomy" id="224308"/>
    <lineage>
        <taxon>Bacteria</taxon>
        <taxon>Bacillati</taxon>
        <taxon>Bacillota</taxon>
        <taxon>Bacilli</taxon>
        <taxon>Bacillales</taxon>
        <taxon>Bacillaceae</taxon>
        <taxon>Bacillus</taxon>
    </lineage>
</organism>
<proteinExistence type="inferred from homology"/>
<gene>
    <name type="primary">yopD</name>
    <name type="ordered locus">BSU20930</name>
</gene>
<keyword id="KW-1003">Cell membrane</keyword>
<keyword id="KW-0472">Membrane</keyword>
<keyword id="KW-1185">Reference proteome</keyword>
<keyword id="KW-0812">Transmembrane</keyword>
<keyword id="KW-1133">Transmembrane helix</keyword>
<dbReference type="EMBL" id="AL009126">
    <property type="protein sequence ID" value="CAB14011.1"/>
    <property type="molecule type" value="Genomic_DNA"/>
</dbReference>
<dbReference type="RefSeq" id="NP_389976.1">
    <property type="nucleotide sequence ID" value="NC_000964.3"/>
</dbReference>
<dbReference type="RefSeq" id="WP_009967512.1">
    <property type="nucleotide sequence ID" value="NZ_OZ025638.1"/>
</dbReference>
<dbReference type="FunCoup" id="O31934">
    <property type="interactions" value="51"/>
</dbReference>
<dbReference type="STRING" id="224308.BSU20930"/>
<dbReference type="PaxDb" id="224308-BSU20930"/>
<dbReference type="EnsemblBacteria" id="CAB14011">
    <property type="protein sequence ID" value="CAB14011"/>
    <property type="gene ID" value="BSU_20930"/>
</dbReference>
<dbReference type="GeneID" id="939180"/>
<dbReference type="KEGG" id="bsu:BSU20930"/>
<dbReference type="PATRIC" id="fig|224308.179.peg.2285"/>
<dbReference type="InParanoid" id="O31934"/>
<dbReference type="OrthoDB" id="2927504at2"/>
<dbReference type="PhylomeDB" id="O31934"/>
<dbReference type="BioCyc" id="BSUB:BSU20930-MONOMER"/>
<dbReference type="Proteomes" id="UP000001570">
    <property type="component" value="Chromosome"/>
</dbReference>
<dbReference type="GO" id="GO:0005886">
    <property type="term" value="C:plasma membrane"/>
    <property type="evidence" value="ECO:0007669"/>
    <property type="project" value="UniProtKB-SubCell"/>
</dbReference>
<dbReference type="InterPro" id="IPR031374">
    <property type="entry name" value="UPF0715"/>
</dbReference>
<dbReference type="Pfam" id="PF17094">
    <property type="entry name" value="UPF0715"/>
    <property type="match status" value="1"/>
</dbReference>
<accession>O31934</accession>
<reference key="1">
    <citation type="journal article" date="1997" name="Nature">
        <title>The complete genome sequence of the Gram-positive bacterium Bacillus subtilis.</title>
        <authorList>
            <person name="Kunst F."/>
            <person name="Ogasawara N."/>
            <person name="Moszer I."/>
            <person name="Albertini A.M."/>
            <person name="Alloni G."/>
            <person name="Azevedo V."/>
            <person name="Bertero M.G."/>
            <person name="Bessieres P."/>
            <person name="Bolotin A."/>
            <person name="Borchert S."/>
            <person name="Borriss R."/>
            <person name="Boursier L."/>
            <person name="Brans A."/>
            <person name="Braun M."/>
            <person name="Brignell S.C."/>
            <person name="Bron S."/>
            <person name="Brouillet S."/>
            <person name="Bruschi C.V."/>
            <person name="Caldwell B."/>
            <person name="Capuano V."/>
            <person name="Carter N.M."/>
            <person name="Choi S.-K."/>
            <person name="Codani J.-J."/>
            <person name="Connerton I.F."/>
            <person name="Cummings N.J."/>
            <person name="Daniel R.A."/>
            <person name="Denizot F."/>
            <person name="Devine K.M."/>
            <person name="Duesterhoeft A."/>
            <person name="Ehrlich S.D."/>
            <person name="Emmerson P.T."/>
            <person name="Entian K.-D."/>
            <person name="Errington J."/>
            <person name="Fabret C."/>
            <person name="Ferrari E."/>
            <person name="Foulger D."/>
            <person name="Fritz C."/>
            <person name="Fujita M."/>
            <person name="Fujita Y."/>
            <person name="Fuma S."/>
            <person name="Galizzi A."/>
            <person name="Galleron N."/>
            <person name="Ghim S.-Y."/>
            <person name="Glaser P."/>
            <person name="Goffeau A."/>
            <person name="Golightly E.J."/>
            <person name="Grandi G."/>
            <person name="Guiseppi G."/>
            <person name="Guy B.J."/>
            <person name="Haga K."/>
            <person name="Haiech J."/>
            <person name="Harwood C.R."/>
            <person name="Henaut A."/>
            <person name="Hilbert H."/>
            <person name="Holsappel S."/>
            <person name="Hosono S."/>
            <person name="Hullo M.-F."/>
            <person name="Itaya M."/>
            <person name="Jones L.-M."/>
            <person name="Joris B."/>
            <person name="Karamata D."/>
            <person name="Kasahara Y."/>
            <person name="Klaerr-Blanchard M."/>
            <person name="Klein C."/>
            <person name="Kobayashi Y."/>
            <person name="Koetter P."/>
            <person name="Koningstein G."/>
            <person name="Krogh S."/>
            <person name="Kumano M."/>
            <person name="Kurita K."/>
            <person name="Lapidus A."/>
            <person name="Lardinois S."/>
            <person name="Lauber J."/>
            <person name="Lazarevic V."/>
            <person name="Lee S.-M."/>
            <person name="Levine A."/>
            <person name="Liu H."/>
            <person name="Masuda S."/>
            <person name="Mauel C."/>
            <person name="Medigue C."/>
            <person name="Medina N."/>
            <person name="Mellado R.P."/>
            <person name="Mizuno M."/>
            <person name="Moestl D."/>
            <person name="Nakai S."/>
            <person name="Noback M."/>
            <person name="Noone D."/>
            <person name="O'Reilly M."/>
            <person name="Ogawa K."/>
            <person name="Ogiwara A."/>
            <person name="Oudega B."/>
            <person name="Park S.-H."/>
            <person name="Parro V."/>
            <person name="Pohl T.M."/>
            <person name="Portetelle D."/>
            <person name="Porwollik S."/>
            <person name="Prescott A.M."/>
            <person name="Presecan E."/>
            <person name="Pujic P."/>
            <person name="Purnelle B."/>
            <person name="Rapoport G."/>
            <person name="Rey M."/>
            <person name="Reynolds S."/>
            <person name="Rieger M."/>
            <person name="Rivolta C."/>
            <person name="Rocha E."/>
            <person name="Roche B."/>
            <person name="Rose M."/>
            <person name="Sadaie Y."/>
            <person name="Sato T."/>
            <person name="Scanlan E."/>
            <person name="Schleich S."/>
            <person name="Schroeter R."/>
            <person name="Scoffone F."/>
            <person name="Sekiguchi J."/>
            <person name="Sekowska A."/>
            <person name="Seror S.J."/>
            <person name="Serror P."/>
            <person name="Shin B.-S."/>
            <person name="Soldo B."/>
            <person name="Sorokin A."/>
            <person name="Tacconi E."/>
            <person name="Takagi T."/>
            <person name="Takahashi H."/>
            <person name="Takemaru K."/>
            <person name="Takeuchi M."/>
            <person name="Tamakoshi A."/>
            <person name="Tanaka T."/>
            <person name="Terpstra P."/>
            <person name="Tognoni A."/>
            <person name="Tosato V."/>
            <person name="Uchiyama S."/>
            <person name="Vandenbol M."/>
            <person name="Vannier F."/>
            <person name="Vassarotti A."/>
            <person name="Viari A."/>
            <person name="Wambutt R."/>
            <person name="Wedler E."/>
            <person name="Wedler H."/>
            <person name="Weitzenegger T."/>
            <person name="Winters P."/>
            <person name="Wipat A."/>
            <person name="Yamamoto H."/>
            <person name="Yamane K."/>
            <person name="Yasumoto K."/>
            <person name="Yata K."/>
            <person name="Yoshida K."/>
            <person name="Yoshikawa H.-F."/>
            <person name="Zumstein E."/>
            <person name="Yoshikawa H."/>
            <person name="Danchin A."/>
        </authorList>
    </citation>
    <scope>NUCLEOTIDE SEQUENCE [LARGE SCALE GENOMIC DNA]</scope>
    <source>
        <strain>168</strain>
    </source>
</reference>
<comment type="subcellular location">
    <subcellularLocation>
        <location evidence="2">Cell membrane</location>
        <topology evidence="2">Multi-pass membrane protein</topology>
    </subcellularLocation>
</comment>
<comment type="similarity">
    <text evidence="2">Belongs to the UPF0715 family.</text>
</comment>
<protein>
    <recommendedName>
        <fullName>SPbeta prophage-derived UPF0715 membrane protein YopD</fullName>
    </recommendedName>
</protein>
<feature type="chain" id="PRO_0000360614" description="SPbeta prophage-derived UPF0715 membrane protein YopD">
    <location>
        <begin position="1"/>
        <end position="131"/>
    </location>
</feature>
<feature type="transmembrane region" description="Helical" evidence="1">
    <location>
        <begin position="12"/>
        <end position="32"/>
    </location>
</feature>
<feature type="transmembrane region" description="Helical" evidence="1">
    <location>
        <begin position="38"/>
        <end position="58"/>
    </location>
</feature>
<feature type="transmembrane region" description="Helical" evidence="1">
    <location>
        <begin position="75"/>
        <end position="95"/>
    </location>
</feature>
<feature type="transmembrane region" description="Helical" evidence="1">
    <location>
        <begin position="108"/>
        <end position="128"/>
    </location>
</feature>
<evidence type="ECO:0000255" key="1"/>
<evidence type="ECO:0000305" key="2"/>
<name>YOPD_BACSU</name>